<accession>P50760</accession>
<comment type="function">
    <text evidence="1">ATP-dependent DNA 3'-5' helicase required for initiation of viral DNA replication. It forms a complex with the viral E2 protein. The E1-E2 complex binds to the replication origin which contains binding sites for both proteins. During the initial step, a dimer of E1 interacts with a dimer of protein E2 leading to a complex that binds the viral origin of replication with high specificity. Then, a second dimer of E1 displaces the E2 dimer in an ATP-dependent manner to form the E1 tetramer. Following this, two E1 monomers are added to each half of the site, which results in the formation of two E1 trimers on the viral ori. Subsequently, two hexamers will be created. The double hexamer acts as a bi-directional helicase machinery and unwinds the viral DNA and then recruits the host DNA polymerase to start replication.</text>
</comment>
<comment type="catalytic activity">
    <reaction evidence="1">
        <text>Couples ATP hydrolysis with the unwinding of duplex DNA by translocating in the 3'-5' direction.</text>
        <dbReference type="EC" id="5.6.2.4"/>
    </reaction>
</comment>
<comment type="catalytic activity">
    <reaction evidence="1">
        <text>ATP + H2O = ADP + phosphate + H(+)</text>
        <dbReference type="Rhea" id="RHEA:13065"/>
        <dbReference type="ChEBI" id="CHEBI:15377"/>
        <dbReference type="ChEBI" id="CHEBI:15378"/>
        <dbReference type="ChEBI" id="CHEBI:30616"/>
        <dbReference type="ChEBI" id="CHEBI:43474"/>
        <dbReference type="ChEBI" id="CHEBI:456216"/>
        <dbReference type="EC" id="5.6.2.4"/>
    </reaction>
</comment>
<comment type="subunit">
    <text evidence="1">Can form hexamers. Interacts with E2 protein; this interaction increases E1 DNA binding specificity. Interacts with host DNA polymerase subunit POLA2. Interacts with host single stranded DNA-binding protein RPA1. Interacts with host TOP1; this interaction stimulates the enzymatic activity of TOP1.</text>
</comment>
<comment type="subcellular location">
    <subcellularLocation>
        <location evidence="1">Host nucleus</location>
    </subcellularLocation>
</comment>
<comment type="PTM">
    <text evidence="1">Phosphorylated.</text>
</comment>
<comment type="PTM">
    <text evidence="1">Sumoylated.</text>
</comment>
<comment type="similarity">
    <text evidence="1">Belongs to the papillomaviridae E1 protein family.</text>
</comment>
<gene>
    <name evidence="1" type="primary">E1</name>
</gene>
<reference key="1">
    <citation type="submission" date="1995-10" db="EMBL/GenBank/DDBJ databases">
        <authorList>
            <person name="Delius H."/>
        </authorList>
    </citation>
    <scope>NUCLEOTIDE SEQUENCE [GENOMIC DNA]</scope>
</reference>
<proteinExistence type="inferred from homology"/>
<organismHost>
    <name type="scientific">Homo sapiens</name>
    <name type="common">Human</name>
    <dbReference type="NCBI Taxonomy" id="9606"/>
</organismHost>
<feature type="chain" id="PRO_0000133120" description="Replication protein E1">
    <location>
        <begin position="1"/>
        <end position="608"/>
    </location>
</feature>
<feature type="domain" description="SF3 helicase" evidence="1">
    <location>
        <begin position="410"/>
        <end position="560"/>
    </location>
</feature>
<feature type="region of interest" description="DNA-binding region" evidence="1">
    <location>
        <begin position="148"/>
        <end position="311"/>
    </location>
</feature>
<feature type="short sequence motif" description="Nuclear localization signal" evidence="1">
    <location>
        <begin position="83"/>
        <end position="85"/>
    </location>
</feature>
<feature type="binding site" evidence="1">
    <location>
        <begin position="436"/>
        <end position="443"/>
    </location>
    <ligand>
        <name>ATP</name>
        <dbReference type="ChEBI" id="CHEBI:30616"/>
    </ligand>
</feature>
<feature type="modified residue" description="Phosphoserine; by host" evidence="1">
    <location>
        <position position="88"/>
    </location>
</feature>
<feature type="modified residue" description="Phosphoserine; by host" evidence="1">
    <location>
        <position position="96"/>
    </location>
</feature>
<feature type="cross-link" description="Glycyl lysine isopeptide (Lys-Gly) (interchain with G-Cter in SUMO)" evidence="1">
    <location>
        <position position="517"/>
    </location>
</feature>
<keyword id="KW-0067">ATP-binding</keyword>
<keyword id="KW-0235">DNA replication</keyword>
<keyword id="KW-0238">DNA-binding</keyword>
<keyword id="KW-0244">Early protein</keyword>
<keyword id="KW-0347">Helicase</keyword>
<keyword id="KW-1048">Host nucleus</keyword>
<keyword id="KW-0378">Hydrolase</keyword>
<keyword id="KW-0413">Isomerase</keyword>
<keyword id="KW-1017">Isopeptide bond</keyword>
<keyword id="KW-0547">Nucleotide-binding</keyword>
<keyword id="KW-0597">Phosphoprotein</keyword>
<keyword id="KW-1185">Reference proteome</keyword>
<keyword id="KW-0832">Ubl conjugation</keyword>
<organism>
    <name type="scientific">Human papillomavirus 22</name>
    <dbReference type="NCBI Taxonomy" id="37954"/>
    <lineage>
        <taxon>Viruses</taxon>
        <taxon>Monodnaviria</taxon>
        <taxon>Shotokuvirae</taxon>
        <taxon>Cossaviricota</taxon>
        <taxon>Papovaviricetes</taxon>
        <taxon>Zurhausenvirales</taxon>
        <taxon>Papillomaviridae</taxon>
        <taxon>Firstpapillomavirinae</taxon>
        <taxon>Betapapillomavirus</taxon>
        <taxon>Betapapillomavirus 2</taxon>
    </lineage>
</organism>
<name>VE1_HPV22</name>
<protein>
    <recommendedName>
        <fullName evidence="1">Replication protein E1</fullName>
        <ecNumber evidence="1">5.6.2.4</ecNumber>
    </recommendedName>
    <alternativeName>
        <fullName evidence="1">ATP-dependent helicase E1</fullName>
    </alternativeName>
    <alternativeName>
        <fullName evidence="1">DNA 3'-5' helicase E1</fullName>
    </alternativeName>
</protein>
<evidence type="ECO:0000255" key="1">
    <source>
        <dbReference type="HAMAP-Rule" id="MF_04000"/>
    </source>
</evidence>
<sequence>MDDDKGTDTTDAKEGCSGWFMLEAACSDDSDLDNSLEKLFEDGTESDVSDLINDDDTAAQGNSRELLCQQQSEECEQQIQYLKRKYFSPKAVQQLSPRLQSMNISPGHKSKRRLFVEHDSGLECSLNEAEDLTEEVEVPASAPAPAAQGGVGSGHYTSLLRCNNVKAVLLGKFKDAFGVSYNELTRQFRSNKTCCKHWVLAIYAAKDELIDASKQLLQQHCTYLWLQTFSPMSLYLCCFNVGKSRETVMRLLSSMLQVNENHILSEPPKIRSMIAALFWYKGSMNPNVYAFGEYPEWIMTQTMIHHQTADSVQFDLSEMIQWAYDQDYVDECTIAYQYARLADSNSNARAFLAHNSQAKYVRECAQMVRYYKRGEMRDMSISAWIHHCISKIEGDGHWQDIVKFLRYQGLNFIVFLDKFRTFLKNFPKKNCLLICGPPDTGKSMFSMSLMKALRGQVVSFANSKSHFWLQPLADAKLALLDDATEVCWQYIDAFLRNGLDGNMVSLDMKHRAPCQMKFPPLIITSNISLKKEKKFPYLHSRIYEFEFPNKFPFDANDTPLFKLTDQSWASFFKRLWTQLELSDQEEEGENGETQRTFQCTTREVNGLI</sequence>
<dbReference type="EC" id="5.6.2.4" evidence="1"/>
<dbReference type="EMBL" id="U31780">
    <property type="protein sequence ID" value="AAA79403.1"/>
    <property type="molecule type" value="Genomic_DNA"/>
</dbReference>
<dbReference type="SMR" id="P50760"/>
<dbReference type="Proteomes" id="UP000009111">
    <property type="component" value="Genome"/>
</dbReference>
<dbReference type="GO" id="GO:0042025">
    <property type="term" value="C:host cell nucleus"/>
    <property type="evidence" value="ECO:0007669"/>
    <property type="project" value="UniProtKB-SubCell"/>
</dbReference>
<dbReference type="GO" id="GO:0005524">
    <property type="term" value="F:ATP binding"/>
    <property type="evidence" value="ECO:0007669"/>
    <property type="project" value="UniProtKB-UniRule"/>
</dbReference>
<dbReference type="GO" id="GO:0016887">
    <property type="term" value="F:ATP hydrolysis activity"/>
    <property type="evidence" value="ECO:0007669"/>
    <property type="project" value="RHEA"/>
</dbReference>
<dbReference type="GO" id="GO:0003677">
    <property type="term" value="F:DNA binding"/>
    <property type="evidence" value="ECO:0007669"/>
    <property type="project" value="UniProtKB-UniRule"/>
</dbReference>
<dbReference type="GO" id="GO:0003678">
    <property type="term" value="F:DNA helicase activity"/>
    <property type="evidence" value="ECO:0007669"/>
    <property type="project" value="UniProtKB-UniRule"/>
</dbReference>
<dbReference type="GO" id="GO:0006260">
    <property type="term" value="P:DNA replication"/>
    <property type="evidence" value="ECO:0007669"/>
    <property type="project" value="UniProtKB-UniRule"/>
</dbReference>
<dbReference type="Gene3D" id="3.40.1310.10">
    <property type="match status" value="1"/>
</dbReference>
<dbReference type="Gene3D" id="3.40.50.300">
    <property type="entry name" value="P-loop containing nucleotide triphosphate hydrolases"/>
    <property type="match status" value="1"/>
</dbReference>
<dbReference type="Gene3D" id="1.10.10.510">
    <property type="entry name" value="Zinc finger, large T-antigen D1 domain"/>
    <property type="match status" value="1"/>
</dbReference>
<dbReference type="HAMAP" id="MF_04000">
    <property type="entry name" value="PPV_E1"/>
    <property type="match status" value="1"/>
</dbReference>
<dbReference type="InterPro" id="IPR014015">
    <property type="entry name" value="Helicase_SF3_DNA-vir"/>
</dbReference>
<dbReference type="InterPro" id="IPR027417">
    <property type="entry name" value="P-loop_NTPase"/>
</dbReference>
<dbReference type="InterPro" id="IPR001177">
    <property type="entry name" value="PPV_DNA_helicase_E1_C"/>
</dbReference>
<dbReference type="InterPro" id="IPR014000">
    <property type="entry name" value="PPV_DNA_helicase_E1_N"/>
</dbReference>
<dbReference type="InterPro" id="IPR046832">
    <property type="entry name" value="PPV_E1_DBD"/>
</dbReference>
<dbReference type="InterPro" id="IPR046935">
    <property type="entry name" value="PPV_E1_DBD_sf"/>
</dbReference>
<dbReference type="InterPro" id="IPR016393">
    <property type="entry name" value="Rep_E1_papillomaV"/>
</dbReference>
<dbReference type="InterPro" id="IPR037102">
    <property type="entry name" value="Znf_lg_T-Ag_D1_dom_sf"/>
</dbReference>
<dbReference type="Pfam" id="PF00519">
    <property type="entry name" value="PPV_E1_C"/>
    <property type="match status" value="1"/>
</dbReference>
<dbReference type="Pfam" id="PF20450">
    <property type="entry name" value="PPV_E1_DBD"/>
    <property type="match status" value="1"/>
</dbReference>
<dbReference type="Pfam" id="PF00524">
    <property type="entry name" value="PPV_E1_N"/>
    <property type="match status" value="1"/>
</dbReference>
<dbReference type="PIRSF" id="PIRSF003383">
    <property type="entry name" value="Rep_E1_papillomaV"/>
    <property type="match status" value="1"/>
</dbReference>
<dbReference type="SUPFAM" id="SSF55464">
    <property type="entry name" value="Origin of replication-binding domain, RBD-like"/>
    <property type="match status" value="1"/>
</dbReference>
<dbReference type="SUPFAM" id="SSF52540">
    <property type="entry name" value="P-loop containing nucleoside triphosphate hydrolases"/>
    <property type="match status" value="1"/>
</dbReference>
<dbReference type="PROSITE" id="PS51206">
    <property type="entry name" value="SF3_HELICASE_1"/>
    <property type="match status" value="1"/>
</dbReference>